<organism>
    <name type="scientific">Arabidopsis thaliana</name>
    <name type="common">Mouse-ear cress</name>
    <dbReference type="NCBI Taxonomy" id="3702"/>
    <lineage>
        <taxon>Eukaryota</taxon>
        <taxon>Viridiplantae</taxon>
        <taxon>Streptophyta</taxon>
        <taxon>Embryophyta</taxon>
        <taxon>Tracheophyta</taxon>
        <taxon>Spermatophyta</taxon>
        <taxon>Magnoliopsida</taxon>
        <taxon>eudicotyledons</taxon>
        <taxon>Gunneridae</taxon>
        <taxon>Pentapetalae</taxon>
        <taxon>rosids</taxon>
        <taxon>malvids</taxon>
        <taxon>Brassicales</taxon>
        <taxon>Brassicaceae</taxon>
        <taxon>Camelineae</taxon>
        <taxon>Arabidopsis</taxon>
    </lineage>
</organism>
<comment type="subcellular location">
    <subcellularLocation>
        <location evidence="3">Golgi apparatus membrane</location>
        <topology evidence="3">Single-pass type II membrane protein</topology>
    </subcellularLocation>
</comment>
<comment type="similarity">
    <text evidence="3">Belongs to the methyltransferase superfamily.</text>
</comment>
<comment type="sequence caution" evidence="3">
    <conflict type="erroneous initiation">
        <sequence resource="EMBL-CDS" id="AAG51752"/>
    </conflict>
    <text>Truncated N-terminus.</text>
</comment>
<feature type="chain" id="PRO_0000393264" description="Probable methyltransferase PMT24">
    <location>
        <begin position="1"/>
        <end position="770"/>
    </location>
</feature>
<feature type="topological domain" description="Cytoplasmic" evidence="1">
    <location>
        <begin position="1"/>
        <end position="17"/>
    </location>
</feature>
<feature type="transmembrane region" description="Helical; Signal-anchor for type II membrane protein" evidence="1">
    <location>
        <begin position="18"/>
        <end position="38"/>
    </location>
</feature>
<feature type="topological domain" description="Lumenal" evidence="1">
    <location>
        <begin position="39"/>
        <end position="770"/>
    </location>
</feature>
<feature type="region of interest" description="Disordered" evidence="2">
    <location>
        <begin position="54"/>
        <end position="223"/>
    </location>
</feature>
<feature type="compositionally biased region" description="Basic and acidic residues" evidence="2">
    <location>
        <begin position="54"/>
        <end position="81"/>
    </location>
</feature>
<feature type="compositionally biased region" description="Basic and acidic residues" evidence="2">
    <location>
        <begin position="93"/>
        <end position="164"/>
    </location>
</feature>
<feature type="compositionally biased region" description="Polar residues" evidence="2">
    <location>
        <begin position="212"/>
        <end position="223"/>
    </location>
</feature>
<feature type="glycosylation site" description="N-linked (GlcNAc...) asparagine" evidence="1">
    <location>
        <position position="160"/>
    </location>
</feature>
<feature type="glycosylation site" description="N-linked (GlcNAc...) asparagine" evidence="1">
    <location>
        <position position="166"/>
    </location>
</feature>
<feature type="glycosylation site" description="N-linked (GlcNAc...) asparagine" evidence="1">
    <location>
        <position position="244"/>
    </location>
</feature>
<feature type="glycosylation site" description="N-linked (GlcNAc...) asparagine" evidence="1">
    <location>
        <position position="363"/>
    </location>
</feature>
<feature type="sequence conflict" description="In Ref. 4; BAE99079." evidence="3" ref="4">
    <original>I</original>
    <variation>T</variation>
    <location>
        <position position="310"/>
    </location>
</feature>
<gene>
    <name type="ordered locus">At1g29470</name>
    <name type="ORF">F15D2.5</name>
</gene>
<sequence>MAMGKYSRVDGKKSSGYGLTITIVLIVSLCLVGAWMFMSSWSAPTESIDFSANERTKDVDTTKSDFKSEEVDRGSKSFPDEKNEETEVVTETNEEKTDPEKSGEENSGEKTESAEERKEFDDKNGDGDRKNGDGEKDTESESDETKQKEKTQLEESSEENKSEDSNGTEENAGESEENTEKKSEENAGETEESTEKSKDVFPAGDQAEITKESSTGSGAWSTQLVESQNEKKAQVSSIKWKVCNVTAGPDYIPCLDNWQAIRKLHSTKHYEHRERHCPEESPRCLVSLPEGYKRSIKWPKSREKIWYTNIPHTKLAEVKGHQNWVKMSGEYLTFPGGGTQFKNGALHYIDFLQESYPDIAWGNRTRVILDVGCGVASFGGYLFDRDVLALSFAPKDEHEAQVQFALERGIPAMSNVMGTKRLPFPGSVFDLIHCARCRVPWHIEGGKLLLELNRALRPGGFFVWSATPVYRKTEEDVGIWKAMSKLTKAMCWELMTIKKDELNEVGAAIYQKPMSNKCYNERSQNEPPLCKDSDDQNAAWNVPLEACIHKVTEDSSKRGAVWPESWPERVETVPQWLDSQEGVYGKPAQEDFTADHERWKTIVSKSYLNGMGIDWSYVRNVMDMRAVYGGFAAALKDLKLWVMNVVPIDSPDTLPIIYERGLFGIYHDWCESFSTYPRTYDLLHADHLFSSLKKRCNLVGVMAEVDRILRPQGTFIVRDDMETIGEIEKMVKSMKWNVRMTHSKDGEGLLSVQKSWWRPTEAETIQSAIA</sequence>
<protein>
    <recommendedName>
        <fullName>Probable methyltransferase PMT24</fullName>
        <ecNumber>2.1.1.-</ecNumber>
    </recommendedName>
</protein>
<evidence type="ECO:0000255" key="1"/>
<evidence type="ECO:0000256" key="2">
    <source>
        <dbReference type="SAM" id="MobiDB-lite"/>
    </source>
</evidence>
<evidence type="ECO:0000305" key="3"/>
<dbReference type="EC" id="2.1.1.-"/>
<dbReference type="EMBL" id="AC068667">
    <property type="protein sequence ID" value="AAG51752.1"/>
    <property type="status" value="ALT_INIT"/>
    <property type="molecule type" value="Genomic_DNA"/>
</dbReference>
<dbReference type="EMBL" id="CP002684">
    <property type="protein sequence ID" value="AEE31093.1"/>
    <property type="molecule type" value="Genomic_DNA"/>
</dbReference>
<dbReference type="EMBL" id="CP002684">
    <property type="protein sequence ID" value="AEE31094.1"/>
    <property type="molecule type" value="Genomic_DNA"/>
</dbReference>
<dbReference type="EMBL" id="BT010751">
    <property type="protein sequence ID" value="AAR23721.1"/>
    <property type="molecule type" value="mRNA"/>
</dbReference>
<dbReference type="EMBL" id="AK227015">
    <property type="protein sequence ID" value="BAE99079.1"/>
    <property type="molecule type" value="mRNA"/>
</dbReference>
<dbReference type="PIR" id="E86417">
    <property type="entry name" value="E86417"/>
</dbReference>
<dbReference type="RefSeq" id="NP_001031109.1">
    <property type="nucleotide sequence ID" value="NM_001036032.1"/>
</dbReference>
<dbReference type="RefSeq" id="NP_174240.2">
    <property type="nucleotide sequence ID" value="NM_102687.4"/>
</dbReference>
<dbReference type="FunCoup" id="Q6NPR7">
    <property type="interactions" value="284"/>
</dbReference>
<dbReference type="STRING" id="3702.Q6NPR7"/>
<dbReference type="GlyGen" id="Q6NPR7">
    <property type="glycosylation" value="4 sites"/>
</dbReference>
<dbReference type="iPTMnet" id="Q6NPR7"/>
<dbReference type="PaxDb" id="3702-AT1G29470.1"/>
<dbReference type="ProteomicsDB" id="234886"/>
<dbReference type="EnsemblPlants" id="AT1G29470.1">
    <property type="protein sequence ID" value="AT1G29470.1"/>
    <property type="gene ID" value="AT1G29470"/>
</dbReference>
<dbReference type="EnsemblPlants" id="AT1G29470.2">
    <property type="protein sequence ID" value="AT1G29470.2"/>
    <property type="gene ID" value="AT1G29470"/>
</dbReference>
<dbReference type="GeneID" id="839823"/>
<dbReference type="Gramene" id="AT1G29470.1">
    <property type="protein sequence ID" value="AT1G29470.1"/>
    <property type="gene ID" value="AT1G29470"/>
</dbReference>
<dbReference type="Gramene" id="AT1G29470.2">
    <property type="protein sequence ID" value="AT1G29470.2"/>
    <property type="gene ID" value="AT1G29470"/>
</dbReference>
<dbReference type="KEGG" id="ath:AT1G29470"/>
<dbReference type="Araport" id="AT1G29470"/>
<dbReference type="TAIR" id="AT1G29470"/>
<dbReference type="eggNOG" id="ENOG502QTUG">
    <property type="taxonomic scope" value="Eukaryota"/>
</dbReference>
<dbReference type="HOGENOM" id="CLU_010485_1_2_1"/>
<dbReference type="InParanoid" id="Q6NPR7"/>
<dbReference type="OMA" id="EENHANE"/>
<dbReference type="PhylomeDB" id="Q6NPR7"/>
<dbReference type="CD-CODE" id="4299E36E">
    <property type="entry name" value="Nucleolus"/>
</dbReference>
<dbReference type="PRO" id="PR:Q6NPR7"/>
<dbReference type="Proteomes" id="UP000006548">
    <property type="component" value="Chromosome 1"/>
</dbReference>
<dbReference type="ExpressionAtlas" id="Q6NPR7">
    <property type="expression patterns" value="baseline and differential"/>
</dbReference>
<dbReference type="GO" id="GO:0005768">
    <property type="term" value="C:endosome"/>
    <property type="evidence" value="ECO:0007005"/>
    <property type="project" value="TAIR"/>
</dbReference>
<dbReference type="GO" id="GO:0005794">
    <property type="term" value="C:Golgi apparatus"/>
    <property type="evidence" value="ECO:0007005"/>
    <property type="project" value="TAIR"/>
</dbReference>
<dbReference type="GO" id="GO:0005797">
    <property type="term" value="C:Golgi medial cisterna"/>
    <property type="evidence" value="ECO:0007005"/>
    <property type="project" value="TAIR"/>
</dbReference>
<dbReference type="GO" id="GO:0000139">
    <property type="term" value="C:Golgi membrane"/>
    <property type="evidence" value="ECO:0007669"/>
    <property type="project" value="UniProtKB-SubCell"/>
</dbReference>
<dbReference type="GO" id="GO:0005634">
    <property type="term" value="C:nucleus"/>
    <property type="evidence" value="ECO:0007005"/>
    <property type="project" value="TAIR"/>
</dbReference>
<dbReference type="GO" id="GO:0005802">
    <property type="term" value="C:trans-Golgi network"/>
    <property type="evidence" value="ECO:0007005"/>
    <property type="project" value="TAIR"/>
</dbReference>
<dbReference type="GO" id="GO:0008168">
    <property type="term" value="F:methyltransferase activity"/>
    <property type="evidence" value="ECO:0007669"/>
    <property type="project" value="UniProtKB-KW"/>
</dbReference>
<dbReference type="GO" id="GO:0032259">
    <property type="term" value="P:methylation"/>
    <property type="evidence" value="ECO:0007669"/>
    <property type="project" value="UniProtKB-KW"/>
</dbReference>
<dbReference type="FunFam" id="3.40.50.150:FF:000084">
    <property type="entry name" value="probable methyltransferase PMT23"/>
    <property type="match status" value="1"/>
</dbReference>
<dbReference type="Gene3D" id="3.40.50.150">
    <property type="entry name" value="Vaccinia Virus protein VP39"/>
    <property type="match status" value="1"/>
</dbReference>
<dbReference type="InterPro" id="IPR004159">
    <property type="entry name" value="Put_SAM_MeTrfase"/>
</dbReference>
<dbReference type="InterPro" id="IPR029063">
    <property type="entry name" value="SAM-dependent_MTases_sf"/>
</dbReference>
<dbReference type="PANTHER" id="PTHR10108:SF1141">
    <property type="entry name" value="METHYLTRANSFERASE PMT24-RELATED"/>
    <property type="match status" value="1"/>
</dbReference>
<dbReference type="PANTHER" id="PTHR10108">
    <property type="entry name" value="SAM-DEPENDENT METHYLTRANSFERASE"/>
    <property type="match status" value="1"/>
</dbReference>
<dbReference type="Pfam" id="PF03141">
    <property type="entry name" value="Methyltransf_29"/>
    <property type="match status" value="1"/>
</dbReference>
<dbReference type="SUPFAM" id="SSF53335">
    <property type="entry name" value="S-adenosyl-L-methionine-dependent methyltransferases"/>
    <property type="match status" value="2"/>
</dbReference>
<keyword id="KW-0325">Glycoprotein</keyword>
<keyword id="KW-0333">Golgi apparatus</keyword>
<keyword id="KW-0472">Membrane</keyword>
<keyword id="KW-0489">Methyltransferase</keyword>
<keyword id="KW-1185">Reference proteome</keyword>
<keyword id="KW-0735">Signal-anchor</keyword>
<keyword id="KW-0808">Transferase</keyword>
<keyword id="KW-0812">Transmembrane</keyword>
<keyword id="KW-1133">Transmembrane helix</keyword>
<reference key="1">
    <citation type="journal article" date="2000" name="Nature">
        <title>Sequence and analysis of chromosome 1 of the plant Arabidopsis thaliana.</title>
        <authorList>
            <person name="Theologis A."/>
            <person name="Ecker J.R."/>
            <person name="Palm C.J."/>
            <person name="Federspiel N.A."/>
            <person name="Kaul S."/>
            <person name="White O."/>
            <person name="Alonso J."/>
            <person name="Altafi H."/>
            <person name="Araujo R."/>
            <person name="Bowman C.L."/>
            <person name="Brooks S.Y."/>
            <person name="Buehler E."/>
            <person name="Chan A."/>
            <person name="Chao Q."/>
            <person name="Chen H."/>
            <person name="Cheuk R.F."/>
            <person name="Chin C.W."/>
            <person name="Chung M.K."/>
            <person name="Conn L."/>
            <person name="Conway A.B."/>
            <person name="Conway A.R."/>
            <person name="Creasy T.H."/>
            <person name="Dewar K."/>
            <person name="Dunn P."/>
            <person name="Etgu P."/>
            <person name="Feldblyum T.V."/>
            <person name="Feng J.-D."/>
            <person name="Fong B."/>
            <person name="Fujii C.Y."/>
            <person name="Gill J.E."/>
            <person name="Goldsmith A.D."/>
            <person name="Haas B."/>
            <person name="Hansen N.F."/>
            <person name="Hughes B."/>
            <person name="Huizar L."/>
            <person name="Hunter J.L."/>
            <person name="Jenkins J."/>
            <person name="Johnson-Hopson C."/>
            <person name="Khan S."/>
            <person name="Khaykin E."/>
            <person name="Kim C.J."/>
            <person name="Koo H.L."/>
            <person name="Kremenetskaia I."/>
            <person name="Kurtz D.B."/>
            <person name="Kwan A."/>
            <person name="Lam B."/>
            <person name="Langin-Hooper S."/>
            <person name="Lee A."/>
            <person name="Lee J.M."/>
            <person name="Lenz C.A."/>
            <person name="Li J.H."/>
            <person name="Li Y.-P."/>
            <person name="Lin X."/>
            <person name="Liu S.X."/>
            <person name="Liu Z.A."/>
            <person name="Luros J.S."/>
            <person name="Maiti R."/>
            <person name="Marziali A."/>
            <person name="Militscher J."/>
            <person name="Miranda M."/>
            <person name="Nguyen M."/>
            <person name="Nierman W.C."/>
            <person name="Osborne B.I."/>
            <person name="Pai G."/>
            <person name="Peterson J."/>
            <person name="Pham P.K."/>
            <person name="Rizzo M."/>
            <person name="Rooney T."/>
            <person name="Rowley D."/>
            <person name="Sakano H."/>
            <person name="Salzberg S.L."/>
            <person name="Schwartz J.R."/>
            <person name="Shinn P."/>
            <person name="Southwick A.M."/>
            <person name="Sun H."/>
            <person name="Tallon L.J."/>
            <person name="Tambunga G."/>
            <person name="Toriumi M.J."/>
            <person name="Town C.D."/>
            <person name="Utterback T."/>
            <person name="Van Aken S."/>
            <person name="Vaysberg M."/>
            <person name="Vysotskaia V.S."/>
            <person name="Walker M."/>
            <person name="Wu D."/>
            <person name="Yu G."/>
            <person name="Fraser C.M."/>
            <person name="Venter J.C."/>
            <person name="Davis R.W."/>
        </authorList>
    </citation>
    <scope>NUCLEOTIDE SEQUENCE [LARGE SCALE GENOMIC DNA]</scope>
    <source>
        <strain>cv. Columbia</strain>
    </source>
</reference>
<reference key="2">
    <citation type="journal article" date="2017" name="Plant J.">
        <title>Araport11: a complete reannotation of the Arabidopsis thaliana reference genome.</title>
        <authorList>
            <person name="Cheng C.Y."/>
            <person name="Krishnakumar V."/>
            <person name="Chan A.P."/>
            <person name="Thibaud-Nissen F."/>
            <person name="Schobel S."/>
            <person name="Town C.D."/>
        </authorList>
    </citation>
    <scope>GENOME REANNOTATION</scope>
    <source>
        <strain>cv. Columbia</strain>
    </source>
</reference>
<reference key="3">
    <citation type="submission" date="2003-11" db="EMBL/GenBank/DDBJ databases">
        <title>Arabidopsis cDNA clones.</title>
        <authorList>
            <person name="Cheuk R."/>
            <person name="Chen H."/>
            <person name="Kim C.J."/>
            <person name="Shinn P."/>
            <person name="Carninci P."/>
            <person name="Hayashizaki Y."/>
            <person name="Ishida J."/>
            <person name="Kamiya A."/>
            <person name="Kawai J."/>
            <person name="Narusaka M."/>
            <person name="Sakurai T."/>
            <person name="Satou M."/>
            <person name="Seki M."/>
            <person name="Shinozaki K."/>
            <person name="Ecker J.R."/>
        </authorList>
    </citation>
    <scope>NUCLEOTIDE SEQUENCE [LARGE SCALE MRNA]</scope>
    <source>
        <strain>cv. Columbia</strain>
    </source>
</reference>
<reference key="4">
    <citation type="submission" date="2006-07" db="EMBL/GenBank/DDBJ databases">
        <title>Large-scale analysis of RIKEN Arabidopsis full-length (RAFL) cDNAs.</title>
        <authorList>
            <person name="Totoki Y."/>
            <person name="Seki M."/>
            <person name="Ishida J."/>
            <person name="Nakajima M."/>
            <person name="Enju A."/>
            <person name="Kamiya A."/>
            <person name="Narusaka M."/>
            <person name="Shin-i T."/>
            <person name="Nakagawa M."/>
            <person name="Sakamoto N."/>
            <person name="Oishi K."/>
            <person name="Kohara Y."/>
            <person name="Kobayashi M."/>
            <person name="Toyoda A."/>
            <person name="Sakaki Y."/>
            <person name="Sakurai T."/>
            <person name="Iida K."/>
            <person name="Akiyama K."/>
            <person name="Satou M."/>
            <person name="Toyoda T."/>
            <person name="Konagaya A."/>
            <person name="Carninci P."/>
            <person name="Kawai J."/>
            <person name="Hayashizaki Y."/>
            <person name="Shinozaki K."/>
        </authorList>
    </citation>
    <scope>NUCLEOTIDE SEQUENCE [LARGE SCALE MRNA]</scope>
    <source>
        <strain>cv. Columbia</strain>
    </source>
</reference>
<reference key="5">
    <citation type="journal article" date="2007" name="Plant J.">
        <title>The TUMOROUS SHOOT DEVELOPMENT2 gene of Arabidopsis encoding a putative methyltransferase is required for cell adhesion and co-ordinated plant development.</title>
        <authorList>
            <person name="Krupkova E."/>
            <person name="Immerzeel P."/>
            <person name="Pauly M."/>
            <person name="Schmulling T."/>
        </authorList>
    </citation>
    <scope>GENE FAMILY</scope>
</reference>
<proteinExistence type="evidence at transcript level"/>
<accession>Q6NPR7</accession>
<accession>Q0WUW9</accession>
<accession>Q9C7Q4</accession>
<name>PMTO_ARATH</name>